<evidence type="ECO:0000250" key="1"/>
<evidence type="ECO:0000250" key="2">
    <source>
        <dbReference type="UniProtKB" id="P00157"/>
    </source>
</evidence>
<evidence type="ECO:0000255" key="3">
    <source>
        <dbReference type="PROSITE-ProRule" id="PRU00967"/>
    </source>
</evidence>
<evidence type="ECO:0000255" key="4">
    <source>
        <dbReference type="PROSITE-ProRule" id="PRU00968"/>
    </source>
</evidence>
<evidence type="ECO:0000305" key="5"/>
<sequence>MPHQQMLILFGLLPVATNISTWWNFGSMLLTCSALQVMTGFSLSMHYTANINLAFCSIIHITRDVPHGWVMQNLHAIGASMFFICIYMYIARGLYYGSYLNKETWLSGTTLLIMLMATAFFGYVLPWGQMSFWAATVITNLLTAIPYLGTTMTTWLWGGFAINDPTLTRFFALHFILPFGIISVSSIHIMLLHEDGSGNPLGTNSDIDKIPFHPYHTYKDILMISIMIITLLLTVSFFPDIMNDPENFSKANPLVTPQHIKPEWYFLFAYGILRSIPNKLGGALALVMSIMILFTMPFTHTSPMRSLTFRPLMQFMFWTLVATFVIITWTATKPVEPPFTTISQVASIIYFTFFMSNPILGWLENKITKHN</sequence>
<proteinExistence type="inferred from homology"/>
<geneLocation type="mitochondrion"/>
<comment type="function">
    <text evidence="2">Component of the ubiquinol-cytochrome c reductase complex (complex III or cytochrome b-c1 complex) that is part of the mitochondrial respiratory chain. The b-c1 complex mediates electron transfer from ubiquinol to cytochrome c. Contributes to the generation of a proton gradient across the mitochondrial membrane that is then used for ATP synthesis.</text>
</comment>
<comment type="cofactor">
    <cofactor evidence="2">
        <name>heme b</name>
        <dbReference type="ChEBI" id="CHEBI:60344"/>
    </cofactor>
    <text evidence="2">Binds 2 heme b groups non-covalently.</text>
</comment>
<comment type="subunit">
    <text evidence="2">The cytochrome bc1 complex contains 3 respiratory subunits (MT-CYB, CYC1 and UQCRFS1), 2 core proteins (UQCRC1 and UQCRC2) and probably 6 low-molecular weight proteins.</text>
</comment>
<comment type="subcellular location">
    <subcellularLocation>
        <location evidence="2">Mitochondrion inner membrane</location>
        <topology evidence="2">Multi-pass membrane protein</topology>
    </subcellularLocation>
</comment>
<comment type="miscellaneous">
    <text evidence="1">Heme 1 (or BL or b562) is low-potential and absorbs at about 562 nm, and heme 2 (or BH or b566) is high-potential and absorbs at about 566 nm.</text>
</comment>
<comment type="similarity">
    <text evidence="3 4">Belongs to the cytochrome b family.</text>
</comment>
<comment type="caution">
    <text evidence="5">An expected heme iron ligand His residue was not found at position 89 in this sequence.</text>
</comment>
<comment type="caution">
    <text evidence="2">The full-length protein contains only eight transmembrane helices, not nine as predicted by bioinformatics tools.</text>
</comment>
<feature type="chain" id="PRO_0000060713" description="Cytochrome b">
    <location>
        <begin position="1"/>
        <end position="371"/>
    </location>
</feature>
<feature type="transmembrane region" description="Helical" evidence="2">
    <location>
        <begin position="25"/>
        <end position="45"/>
    </location>
</feature>
<feature type="transmembrane region" description="Helical" evidence="2">
    <location>
        <begin position="69"/>
        <end position="90"/>
    </location>
</feature>
<feature type="transmembrane region" description="Helical" evidence="2">
    <location>
        <begin position="105"/>
        <end position="125"/>
    </location>
</feature>
<feature type="transmembrane region" description="Helical" evidence="2">
    <location>
        <begin position="170"/>
        <end position="190"/>
    </location>
</feature>
<feature type="transmembrane region" description="Helical" evidence="2">
    <location>
        <begin position="218"/>
        <end position="238"/>
    </location>
</feature>
<feature type="transmembrane region" description="Helical" evidence="2">
    <location>
        <begin position="280"/>
        <end position="300"/>
    </location>
</feature>
<feature type="transmembrane region" description="Helical" evidence="2">
    <location>
        <begin position="312"/>
        <end position="332"/>
    </location>
</feature>
<feature type="transmembrane region" description="Helical" evidence="2">
    <location>
        <begin position="339"/>
        <end position="358"/>
    </location>
</feature>
<feature type="binding site" description="axial binding residue" evidence="2">
    <location>
        <position position="75"/>
    </location>
    <ligand>
        <name>heme b</name>
        <dbReference type="ChEBI" id="CHEBI:60344"/>
        <label>b562</label>
    </ligand>
    <ligandPart>
        <name>Fe</name>
        <dbReference type="ChEBI" id="CHEBI:18248"/>
    </ligandPart>
</feature>
<feature type="binding site" description="axial binding residue" evidence="2">
    <location>
        <position position="174"/>
    </location>
    <ligand>
        <name>heme b</name>
        <dbReference type="ChEBI" id="CHEBI:60344"/>
        <label>b562</label>
    </ligand>
    <ligandPart>
        <name>Fe</name>
        <dbReference type="ChEBI" id="CHEBI:18248"/>
    </ligandPart>
</feature>
<feature type="binding site" description="axial binding residue" evidence="2">
    <location>
        <position position="188"/>
    </location>
    <ligand>
        <name>heme b</name>
        <dbReference type="ChEBI" id="CHEBI:60344"/>
        <label>b566</label>
    </ligand>
    <ligandPart>
        <name>Fe</name>
        <dbReference type="ChEBI" id="CHEBI:18248"/>
    </ligandPart>
</feature>
<feature type="binding site" evidence="2">
    <location>
        <position position="193"/>
    </location>
    <ligand>
        <name>a ubiquinone</name>
        <dbReference type="ChEBI" id="CHEBI:16389"/>
    </ligand>
</feature>
<accession>O48023</accession>
<organism>
    <name type="scientific">Candoia aspera</name>
    <name type="common">New Guinea boa</name>
    <dbReference type="NCBI Taxonomy" id="51853"/>
    <lineage>
        <taxon>Eukaryota</taxon>
        <taxon>Metazoa</taxon>
        <taxon>Chordata</taxon>
        <taxon>Craniata</taxon>
        <taxon>Vertebrata</taxon>
        <taxon>Euteleostomi</taxon>
        <taxon>Lepidosauria</taxon>
        <taxon>Squamata</taxon>
        <taxon>Bifurcata</taxon>
        <taxon>Unidentata</taxon>
        <taxon>Episquamata</taxon>
        <taxon>Toxicofera</taxon>
        <taxon>Serpentes</taxon>
        <taxon>Henophidia</taxon>
        <taxon>Boidae</taxon>
        <taxon>Boinae</taxon>
        <taxon>Candoia</taxon>
    </lineage>
</organism>
<keyword id="KW-0249">Electron transport</keyword>
<keyword id="KW-0349">Heme</keyword>
<keyword id="KW-0408">Iron</keyword>
<keyword id="KW-0472">Membrane</keyword>
<keyword id="KW-0479">Metal-binding</keyword>
<keyword id="KW-0496">Mitochondrion</keyword>
<keyword id="KW-0999">Mitochondrion inner membrane</keyword>
<keyword id="KW-0679">Respiratory chain</keyword>
<keyword id="KW-0812">Transmembrane</keyword>
<keyword id="KW-1133">Transmembrane helix</keyword>
<keyword id="KW-0813">Transport</keyword>
<keyword id="KW-0830">Ubiquinone</keyword>
<name>CYB_CANAS</name>
<dbReference type="EMBL" id="U69751">
    <property type="protein sequence ID" value="AAC01785.1"/>
    <property type="molecule type" value="Genomic_DNA"/>
</dbReference>
<dbReference type="SMR" id="O48023"/>
<dbReference type="GO" id="GO:0005743">
    <property type="term" value="C:mitochondrial inner membrane"/>
    <property type="evidence" value="ECO:0007669"/>
    <property type="project" value="UniProtKB-SubCell"/>
</dbReference>
<dbReference type="GO" id="GO:0045275">
    <property type="term" value="C:respiratory chain complex III"/>
    <property type="evidence" value="ECO:0007669"/>
    <property type="project" value="InterPro"/>
</dbReference>
<dbReference type="GO" id="GO:0046872">
    <property type="term" value="F:metal ion binding"/>
    <property type="evidence" value="ECO:0007669"/>
    <property type="project" value="UniProtKB-KW"/>
</dbReference>
<dbReference type="GO" id="GO:0008121">
    <property type="term" value="F:ubiquinol-cytochrome-c reductase activity"/>
    <property type="evidence" value="ECO:0007669"/>
    <property type="project" value="InterPro"/>
</dbReference>
<dbReference type="GO" id="GO:0006122">
    <property type="term" value="P:mitochondrial electron transport, ubiquinol to cytochrome c"/>
    <property type="evidence" value="ECO:0007669"/>
    <property type="project" value="TreeGrafter"/>
</dbReference>
<dbReference type="CDD" id="cd00290">
    <property type="entry name" value="cytochrome_b_C"/>
    <property type="match status" value="1"/>
</dbReference>
<dbReference type="CDD" id="cd00284">
    <property type="entry name" value="Cytochrome_b_N"/>
    <property type="match status" value="1"/>
</dbReference>
<dbReference type="Gene3D" id="1.20.810.10">
    <property type="entry name" value="Cytochrome Bc1 Complex, Chain C"/>
    <property type="match status" value="1"/>
</dbReference>
<dbReference type="InterPro" id="IPR005798">
    <property type="entry name" value="Cyt_b/b6_C"/>
</dbReference>
<dbReference type="InterPro" id="IPR036150">
    <property type="entry name" value="Cyt_b/b6_C_sf"/>
</dbReference>
<dbReference type="InterPro" id="IPR005797">
    <property type="entry name" value="Cyt_b/b6_N"/>
</dbReference>
<dbReference type="InterPro" id="IPR027387">
    <property type="entry name" value="Cytb/b6-like_sf"/>
</dbReference>
<dbReference type="InterPro" id="IPR030689">
    <property type="entry name" value="Cytochrome_b"/>
</dbReference>
<dbReference type="InterPro" id="IPR048260">
    <property type="entry name" value="Cytochrome_b_C_euk/bac"/>
</dbReference>
<dbReference type="InterPro" id="IPR048259">
    <property type="entry name" value="Cytochrome_b_N_euk/bac"/>
</dbReference>
<dbReference type="InterPro" id="IPR016174">
    <property type="entry name" value="Di-haem_cyt_TM"/>
</dbReference>
<dbReference type="PANTHER" id="PTHR19271">
    <property type="entry name" value="CYTOCHROME B"/>
    <property type="match status" value="1"/>
</dbReference>
<dbReference type="PANTHER" id="PTHR19271:SF16">
    <property type="entry name" value="CYTOCHROME B"/>
    <property type="match status" value="1"/>
</dbReference>
<dbReference type="Pfam" id="PF00032">
    <property type="entry name" value="Cytochrom_B_C"/>
    <property type="match status" value="1"/>
</dbReference>
<dbReference type="Pfam" id="PF00033">
    <property type="entry name" value="Cytochrome_B"/>
    <property type="match status" value="1"/>
</dbReference>
<dbReference type="PIRSF" id="PIRSF038885">
    <property type="entry name" value="COB"/>
    <property type="match status" value="1"/>
</dbReference>
<dbReference type="SUPFAM" id="SSF81648">
    <property type="entry name" value="a domain/subunit of cytochrome bc1 complex (Ubiquinol-cytochrome c reductase)"/>
    <property type="match status" value="1"/>
</dbReference>
<dbReference type="SUPFAM" id="SSF81342">
    <property type="entry name" value="Transmembrane di-heme cytochromes"/>
    <property type="match status" value="1"/>
</dbReference>
<dbReference type="PROSITE" id="PS51003">
    <property type="entry name" value="CYTB_CTER"/>
    <property type="match status" value="1"/>
</dbReference>
<dbReference type="PROSITE" id="PS51002">
    <property type="entry name" value="CYTB_NTER"/>
    <property type="match status" value="1"/>
</dbReference>
<gene>
    <name type="primary">MT-CYB</name>
    <name type="synonym">COB</name>
    <name type="synonym">CYTB</name>
    <name type="synonym">MTCYB</name>
</gene>
<protein>
    <recommendedName>
        <fullName>Cytochrome b</fullName>
    </recommendedName>
    <alternativeName>
        <fullName>Complex III subunit 3</fullName>
    </alternativeName>
    <alternativeName>
        <fullName>Complex III subunit III</fullName>
    </alternativeName>
    <alternativeName>
        <fullName>Cytochrome b-c1 complex subunit 3</fullName>
    </alternativeName>
    <alternativeName>
        <fullName>Ubiquinol-cytochrome-c reductase complex cytochrome b subunit</fullName>
    </alternativeName>
</protein>
<reference key="1">
    <citation type="thesis" date="1997" institute="Queen's University / Kingston" country="Canada">
        <title>Hic Sunt Serpentes -- molecular phylogenetics and the Boidae (Serpentes: Booidea).</title>
        <authorList>
            <person name="Campbell B.N."/>
        </authorList>
    </citation>
    <scope>NUCLEOTIDE SEQUENCE [GENOMIC DNA]</scope>
</reference>